<gene>
    <name type="primary">dapB</name>
    <name type="ORF">ATEG_01673</name>
</gene>
<evidence type="ECO:0000250" key="1"/>
<evidence type="ECO:0000255" key="2"/>
<evidence type="ECO:0000255" key="3">
    <source>
        <dbReference type="PROSITE-ProRule" id="PRU10084"/>
    </source>
</evidence>
<evidence type="ECO:0000256" key="4">
    <source>
        <dbReference type="SAM" id="MobiDB-lite"/>
    </source>
</evidence>
<evidence type="ECO:0000305" key="5"/>
<reference key="1">
    <citation type="submission" date="2005-09" db="EMBL/GenBank/DDBJ databases">
        <title>Annotation of the Aspergillus terreus NIH2624 genome.</title>
        <authorList>
            <person name="Birren B.W."/>
            <person name="Lander E.S."/>
            <person name="Galagan J.E."/>
            <person name="Nusbaum C."/>
            <person name="Devon K."/>
            <person name="Henn M."/>
            <person name="Ma L.-J."/>
            <person name="Jaffe D.B."/>
            <person name="Butler J."/>
            <person name="Alvarez P."/>
            <person name="Gnerre S."/>
            <person name="Grabherr M."/>
            <person name="Kleber M."/>
            <person name="Mauceli E.W."/>
            <person name="Brockman W."/>
            <person name="Rounsley S."/>
            <person name="Young S.K."/>
            <person name="LaButti K."/>
            <person name="Pushparaj V."/>
            <person name="DeCaprio D."/>
            <person name="Crawford M."/>
            <person name="Koehrsen M."/>
            <person name="Engels R."/>
            <person name="Montgomery P."/>
            <person name="Pearson M."/>
            <person name="Howarth C."/>
            <person name="Larson L."/>
            <person name="Luoma S."/>
            <person name="White J."/>
            <person name="Alvarado L."/>
            <person name="Kodira C.D."/>
            <person name="Zeng Q."/>
            <person name="Oleary S."/>
            <person name="Yandava C."/>
            <person name="Denning D.W."/>
            <person name="Nierman W.C."/>
            <person name="Milne T."/>
            <person name="Madden K."/>
        </authorList>
    </citation>
    <scope>NUCLEOTIDE SEQUENCE [LARGE SCALE GENOMIC DNA]</scope>
    <source>
        <strain>NIH 2624 / FGSC A1156</strain>
    </source>
</reference>
<dbReference type="EC" id="3.4.14.5"/>
<dbReference type="EMBL" id="CH476595">
    <property type="protein sequence ID" value="EAU38430.1"/>
    <property type="molecule type" value="Genomic_DNA"/>
</dbReference>
<dbReference type="RefSeq" id="XP_001209038.1">
    <property type="nucleotide sequence ID" value="XM_001209038.1"/>
</dbReference>
<dbReference type="SMR" id="Q0CXB1"/>
<dbReference type="STRING" id="341663.Q0CXB1"/>
<dbReference type="ESTHER" id="asptn-dapb">
    <property type="family name" value="DPP4N_Peptidase_S9"/>
</dbReference>
<dbReference type="MEROPS" id="S09.006"/>
<dbReference type="GlyCosmos" id="Q0CXB1">
    <property type="glycosylation" value="3 sites, No reported glycans"/>
</dbReference>
<dbReference type="EnsemblFungi" id="EAU38430">
    <property type="protein sequence ID" value="EAU38430"/>
    <property type="gene ID" value="ATEG_01673"/>
</dbReference>
<dbReference type="GeneID" id="4315814"/>
<dbReference type="VEuPathDB" id="FungiDB:ATEG_01673"/>
<dbReference type="eggNOG" id="KOG2100">
    <property type="taxonomic scope" value="Eukaryota"/>
</dbReference>
<dbReference type="HOGENOM" id="CLU_006105_0_1_1"/>
<dbReference type="OMA" id="MRTPQEN"/>
<dbReference type="OrthoDB" id="16520at2759"/>
<dbReference type="Proteomes" id="UP000007963">
    <property type="component" value="Unassembled WGS sequence"/>
</dbReference>
<dbReference type="GO" id="GO:0000329">
    <property type="term" value="C:fungal-type vacuole membrane"/>
    <property type="evidence" value="ECO:0007669"/>
    <property type="project" value="EnsemblFungi"/>
</dbReference>
<dbReference type="GO" id="GO:0005886">
    <property type="term" value="C:plasma membrane"/>
    <property type="evidence" value="ECO:0007669"/>
    <property type="project" value="TreeGrafter"/>
</dbReference>
<dbReference type="GO" id="GO:0004177">
    <property type="term" value="F:aminopeptidase activity"/>
    <property type="evidence" value="ECO:0007669"/>
    <property type="project" value="UniProtKB-KW"/>
</dbReference>
<dbReference type="GO" id="GO:0008239">
    <property type="term" value="F:dipeptidyl-peptidase activity"/>
    <property type="evidence" value="ECO:0007669"/>
    <property type="project" value="UniProtKB-EC"/>
</dbReference>
<dbReference type="GO" id="GO:0004252">
    <property type="term" value="F:serine-type endopeptidase activity"/>
    <property type="evidence" value="ECO:0007669"/>
    <property type="project" value="InterPro"/>
</dbReference>
<dbReference type="GO" id="GO:0006508">
    <property type="term" value="P:proteolysis"/>
    <property type="evidence" value="ECO:0007669"/>
    <property type="project" value="UniProtKB-KW"/>
</dbReference>
<dbReference type="FunFam" id="3.40.50.1820:FF:000003">
    <property type="entry name" value="Dipeptidyl peptidase 4"/>
    <property type="match status" value="1"/>
</dbReference>
<dbReference type="Gene3D" id="3.40.50.1820">
    <property type="entry name" value="alpha/beta hydrolase"/>
    <property type="match status" value="1"/>
</dbReference>
<dbReference type="Gene3D" id="2.140.10.30">
    <property type="entry name" value="Dipeptidylpeptidase IV, N-terminal domain"/>
    <property type="match status" value="1"/>
</dbReference>
<dbReference type="InterPro" id="IPR029058">
    <property type="entry name" value="AB_hydrolase_fold"/>
</dbReference>
<dbReference type="InterPro" id="IPR002471">
    <property type="entry name" value="Pept_S9_AS"/>
</dbReference>
<dbReference type="InterPro" id="IPR001375">
    <property type="entry name" value="Peptidase_S9_cat"/>
</dbReference>
<dbReference type="InterPro" id="IPR002469">
    <property type="entry name" value="Peptidase_S9B_N"/>
</dbReference>
<dbReference type="InterPro" id="IPR050278">
    <property type="entry name" value="Serine_Prot_S9B/DPPIV"/>
</dbReference>
<dbReference type="PANTHER" id="PTHR11731:SF200">
    <property type="entry name" value="DIPEPTIDYL PEPTIDASE 10, ISOFORM B"/>
    <property type="match status" value="1"/>
</dbReference>
<dbReference type="PANTHER" id="PTHR11731">
    <property type="entry name" value="PROTEASE FAMILY S9B,C DIPEPTIDYL-PEPTIDASE IV-RELATED"/>
    <property type="match status" value="1"/>
</dbReference>
<dbReference type="Pfam" id="PF00930">
    <property type="entry name" value="DPPIV_N"/>
    <property type="match status" value="1"/>
</dbReference>
<dbReference type="Pfam" id="PF00326">
    <property type="entry name" value="Peptidase_S9"/>
    <property type="match status" value="1"/>
</dbReference>
<dbReference type="SUPFAM" id="SSF53474">
    <property type="entry name" value="alpha/beta-Hydrolases"/>
    <property type="match status" value="1"/>
</dbReference>
<dbReference type="SUPFAM" id="SSF82171">
    <property type="entry name" value="DPP6 N-terminal domain-like"/>
    <property type="match status" value="1"/>
</dbReference>
<dbReference type="PROSITE" id="PS00708">
    <property type="entry name" value="PRO_ENDOPEP_SER"/>
    <property type="match status" value="1"/>
</dbReference>
<name>DAPB_ASPTN</name>
<comment type="function">
    <text evidence="1">Type IV dipeptidyl-peptidase which removes N-terminal dipeptides sequentially from polypeptides having unsubstituted N-termini provided that the penultimate residue is proline.</text>
</comment>
<comment type="catalytic activity">
    <reaction evidence="3">
        <text>Release of an N-terminal dipeptide, Xaa-Yaa-|-Zaa-, from a polypeptide, preferentially when Yaa is Pro, provided Zaa is neither Pro nor hydroxyproline.</text>
        <dbReference type="EC" id="3.4.14.5"/>
    </reaction>
</comment>
<comment type="subcellular location">
    <subcellularLocation>
        <location evidence="1">Vacuole membrane</location>
        <topology evidence="1">Single-pass type II membrane protein</topology>
    </subcellularLocation>
    <text evidence="1">Lysosome-like vacuoles.</text>
</comment>
<comment type="similarity">
    <text evidence="5">Belongs to the peptidase S9B family.</text>
</comment>
<feature type="chain" id="PRO_0000412139" description="Probable dipeptidyl-aminopeptidase B">
    <location>
        <begin position="1"/>
        <end position="914"/>
    </location>
</feature>
<feature type="topological domain" description="Cytoplasmic" evidence="2">
    <location>
        <begin position="1"/>
        <end position="89"/>
    </location>
</feature>
<feature type="transmembrane region" description="Helical; Signal-anchor for type II membrane protein" evidence="2">
    <location>
        <begin position="90"/>
        <end position="110"/>
    </location>
</feature>
<feature type="topological domain" description="Vacuolar" evidence="2">
    <location>
        <begin position="111"/>
        <end position="914"/>
    </location>
</feature>
<feature type="region of interest" description="Disordered" evidence="4">
    <location>
        <begin position="1"/>
        <end position="81"/>
    </location>
</feature>
<feature type="compositionally biased region" description="Acidic residues" evidence="4">
    <location>
        <begin position="1"/>
        <end position="10"/>
    </location>
</feature>
<feature type="compositionally biased region" description="Low complexity" evidence="4">
    <location>
        <begin position="20"/>
        <end position="34"/>
    </location>
</feature>
<feature type="active site" description="Charge relay system" evidence="3">
    <location>
        <position position="752"/>
    </location>
</feature>
<feature type="active site" description="Charge relay system" evidence="3">
    <location>
        <position position="829"/>
    </location>
</feature>
<feature type="active site" description="Charge relay system" evidence="3">
    <location>
        <position position="862"/>
    </location>
</feature>
<feature type="glycosylation site" description="N-linked (GlcNAc...) asparagine" evidence="2">
    <location>
        <position position="347"/>
    </location>
</feature>
<feature type="glycosylation site" description="N-linked (GlcNAc...) asparagine" evidence="2">
    <location>
        <position position="638"/>
    </location>
</feature>
<feature type="glycosylation site" description="N-linked (GlcNAc...) asparagine" evidence="2">
    <location>
        <position position="806"/>
    </location>
</feature>
<protein>
    <recommendedName>
        <fullName>Probable dipeptidyl-aminopeptidase B</fullName>
        <shortName>DPAP B</shortName>
        <ecNumber>3.4.14.5</ecNumber>
    </recommendedName>
</protein>
<keyword id="KW-0031">Aminopeptidase</keyword>
<keyword id="KW-0325">Glycoprotein</keyword>
<keyword id="KW-0378">Hydrolase</keyword>
<keyword id="KW-0472">Membrane</keyword>
<keyword id="KW-0645">Protease</keyword>
<keyword id="KW-1185">Reference proteome</keyword>
<keyword id="KW-0720">Serine protease</keyword>
<keyword id="KW-0735">Signal-anchor</keyword>
<keyword id="KW-0812">Transmembrane</keyword>
<keyword id="KW-1133">Transmembrane helix</keyword>
<keyword id="KW-0926">Vacuole</keyword>
<proteinExistence type="inferred from homology"/>
<organism>
    <name type="scientific">Aspergillus terreus (strain NIH 2624 / FGSC A1156)</name>
    <dbReference type="NCBI Taxonomy" id="341663"/>
    <lineage>
        <taxon>Eukaryota</taxon>
        <taxon>Fungi</taxon>
        <taxon>Dikarya</taxon>
        <taxon>Ascomycota</taxon>
        <taxon>Pezizomycotina</taxon>
        <taxon>Eurotiomycetes</taxon>
        <taxon>Eurotiomycetidae</taxon>
        <taxon>Eurotiales</taxon>
        <taxon>Aspergillaceae</taxon>
        <taxon>Aspergillus</taxon>
        <taxon>Aspergillus subgen. Circumdati</taxon>
    </lineage>
</organism>
<sequence length="914" mass="102747">MGKSEADEDAQFLPMNRPRSSSAASQTSSDSGLSVESALIRNSTYGKTPDEAYNPAGDPRYRDIEDGEAESDQPFLPSRKGSGARARRVFWGLLLLCLAGWVLAFVLFLIQGRSGYSATSEELQQHEADSSAGVTSDGKPVTLKQVLSGDWLPRSHGIAWIAGPDGEDGLLVEAGEDGGEGFLRVKDIRARHGDDAGTLKSRVLMKKSTFYAGQRSILTRLTWPSPDLKKVLVLSDYEKNWRHSYTGLYWIFDVDSQTAEPLDPDVPEGRVQLASWSPNSDAVVFVRDNNMFLRKLSSDKVVPITKDGGKDLFYGVPDWVYEEEVLSGNSATWWSNDAKYVAFLRTNESTVPEYPVQYFLSRPSGKKPLPGLEDYPDVRQIKYPKAGAPNPVVNLQFYNVEKNEVFSVEVPDDFADDDRIIIEVLWAAESNVLVRATNRESDVLKIFLIDTESRTGKMVRLEDIVGLDGGWVEPSQSTRFIPADPAAGRPNDGYIDTVIHDGYDHLAYFTPLDNPEPIMLTTGEWEVVEAPTAVDLRRGLVYFVATKEAPTQRHVYQVQLDGSNLKPLTDTSKPGYYHVSFSDGTAYALLSYQGPSIPWQAIINTEGDDVVFEETIEENPELARMVETYAIPSKVFSNITIDGFTLQMVERRPPHFNPHKKYPVLFFLYGGPGSQTVDRKFTIDFQSYVASNLGYIVVTLDGRGTGFIGREARCIIRGNLGYYEAHDQITAAKMFAEKSYVDESRMAIWGWSYGGFMTLKTLEQDAGQTFQYGMAVAPVTDWRFYDSIYTERYMHTPQHNPSGYDNSSITDMAALEENVRFLVMHGASDDNVHLQNTLTLIDKLDLSNVQNYDVHFYPDSDHSIFFHNAHYMVYERLSNWLVNAFNGEWHRIAAPVPDNSMWQRFKRALPVFVH</sequence>
<accession>Q0CXB1</accession>